<evidence type="ECO:0000255" key="1">
    <source>
        <dbReference type="HAMAP-Rule" id="MF_01390"/>
    </source>
</evidence>
<protein>
    <recommendedName>
        <fullName evidence="1">Maturase K</fullName>
    </recommendedName>
    <alternativeName>
        <fullName evidence="1">Intron maturase</fullName>
    </alternativeName>
</protein>
<reference key="1">
    <citation type="journal article" date="1998" name="Shokubutsu Kenkyu Zasshi">
        <title>Investigation of sectional relationships in the genus Rhododendron (Ericaceae) based on matK sequences.</title>
        <authorList>
            <person name="Kurashige Y."/>
            <person name="Mine M."/>
            <person name="Kobayashi N."/>
            <person name="Handa T."/>
            <person name="Takayanagi K."/>
            <person name="Yukawa T."/>
        </authorList>
    </citation>
    <scope>NUCLEOTIDE SEQUENCE [GENOMIC DNA]</scope>
</reference>
<proteinExistence type="inferred from homology"/>
<dbReference type="EMBL" id="AB012750">
    <property type="protein sequence ID" value="BAA25871.1"/>
    <property type="molecule type" value="Genomic_DNA"/>
</dbReference>
<dbReference type="GO" id="GO:0009507">
    <property type="term" value="C:chloroplast"/>
    <property type="evidence" value="ECO:0007669"/>
    <property type="project" value="UniProtKB-SubCell"/>
</dbReference>
<dbReference type="GO" id="GO:0003723">
    <property type="term" value="F:RNA binding"/>
    <property type="evidence" value="ECO:0007669"/>
    <property type="project" value="UniProtKB-KW"/>
</dbReference>
<dbReference type="GO" id="GO:0006397">
    <property type="term" value="P:mRNA processing"/>
    <property type="evidence" value="ECO:0007669"/>
    <property type="project" value="UniProtKB-KW"/>
</dbReference>
<dbReference type="GO" id="GO:0008380">
    <property type="term" value="P:RNA splicing"/>
    <property type="evidence" value="ECO:0007669"/>
    <property type="project" value="UniProtKB-UniRule"/>
</dbReference>
<dbReference type="GO" id="GO:0008033">
    <property type="term" value="P:tRNA processing"/>
    <property type="evidence" value="ECO:0007669"/>
    <property type="project" value="UniProtKB-KW"/>
</dbReference>
<dbReference type="HAMAP" id="MF_01390">
    <property type="entry name" value="MatK"/>
    <property type="match status" value="1"/>
</dbReference>
<dbReference type="InterPro" id="IPR024937">
    <property type="entry name" value="Domain_X"/>
</dbReference>
<dbReference type="InterPro" id="IPR002866">
    <property type="entry name" value="Maturase_MatK"/>
</dbReference>
<dbReference type="InterPro" id="IPR024942">
    <property type="entry name" value="Maturase_MatK_N"/>
</dbReference>
<dbReference type="PANTHER" id="PTHR34811">
    <property type="entry name" value="MATURASE K"/>
    <property type="match status" value="1"/>
</dbReference>
<dbReference type="PANTHER" id="PTHR34811:SF1">
    <property type="entry name" value="MATURASE K"/>
    <property type="match status" value="1"/>
</dbReference>
<dbReference type="Pfam" id="PF01348">
    <property type="entry name" value="Intron_maturas2"/>
    <property type="match status" value="1"/>
</dbReference>
<dbReference type="Pfam" id="PF01824">
    <property type="entry name" value="MatK_N"/>
    <property type="match status" value="1"/>
</dbReference>
<comment type="function">
    <text evidence="1">Usually encoded in the trnK tRNA gene intron. Probably assists in splicing its own and other chloroplast group II introns.</text>
</comment>
<comment type="subcellular location">
    <subcellularLocation>
        <location>Plastid</location>
        <location>Chloroplast</location>
    </subcellularLocation>
</comment>
<comment type="similarity">
    <text evidence="1">Belongs to the intron maturase 2 family. MatK subfamily.</text>
</comment>
<organism>
    <name type="scientific">Rhododendron tsusiophyllum</name>
    <name type="common">Rhododendron</name>
    <name type="synonym">Tsusiophyllum tanakae</name>
    <dbReference type="NCBI Taxonomy" id="46249"/>
    <lineage>
        <taxon>Eukaryota</taxon>
        <taxon>Viridiplantae</taxon>
        <taxon>Streptophyta</taxon>
        <taxon>Embryophyta</taxon>
        <taxon>Tracheophyta</taxon>
        <taxon>Spermatophyta</taxon>
        <taxon>Magnoliopsida</taxon>
        <taxon>eudicotyledons</taxon>
        <taxon>Gunneridae</taxon>
        <taxon>Pentapetalae</taxon>
        <taxon>asterids</taxon>
        <taxon>Ericales</taxon>
        <taxon>Ericaceae</taxon>
        <taxon>Ericoideae</taxon>
        <taxon>Rhodoreae</taxon>
        <taxon>Rhododendron</taxon>
    </lineage>
</organism>
<geneLocation type="chloroplast"/>
<feature type="chain" id="PRO_0000143678" description="Maturase K">
    <location>
        <begin position="1"/>
        <end position="506"/>
    </location>
</feature>
<name>MATK_RHOTS</name>
<keyword id="KW-0150">Chloroplast</keyword>
<keyword id="KW-0507">mRNA processing</keyword>
<keyword id="KW-0934">Plastid</keyword>
<keyword id="KW-0694">RNA-binding</keyword>
<keyword id="KW-0819">tRNA processing</keyword>
<gene>
    <name evidence="1" type="primary">matK</name>
</gene>
<sequence length="506" mass="60569">MEEFKRNLELDRSQQHDFIYPLIFQEYIYALAHDRGLNRSIFLEDTGYDNKSSLLIVKRLITHLITQMYQQNHFLFSGNDSNQNKFLGYNTNFYSQMIFEGFAVVVEIPFYLRLLSFLEGKERVKSHNLRSIHSIFPFLEDKFSHLVYVLDILISHPIHLEILVQTLRYWVKDASSLHLLRFFLHEYPIWNSLITPKKSSFSFSIRNQRFFLFLYNFNVWEYESIFVFLRNQSSHLRSISSETFLERISFYRKIELEVFTKDFKAILWVFKEPFLHYVRYRGKAILASKGTFLLMNKWKYYLVNFWQCYFYMWSQPRRININQLSNHSLDFLGYLSTVRLKPLMVRSQMIENSFLIENASKKFDTLMPITPMIGSLSKAKFCNVLGHPMSKPVWAALSDSDIIERFGRIYRNLSHYYSGSLKKMSLYRIKYILRLSCARTLARKHKSTVRAFLKRLGVGLLEEFFTEEEQVFYLTFAKASSNSGELYRRRVWYLDIICINDLANYE</sequence>
<accession>O62991</accession>